<reference key="1">
    <citation type="submission" date="2006-01" db="EMBL/GenBank/DDBJ databases">
        <title>Complete sequence of Anaeromyxobacter dehalogenans 2CP-C.</title>
        <authorList>
            <person name="Copeland A."/>
            <person name="Lucas S."/>
            <person name="Lapidus A."/>
            <person name="Barry K."/>
            <person name="Detter J.C."/>
            <person name="Glavina T."/>
            <person name="Hammon N."/>
            <person name="Israni S."/>
            <person name="Pitluck S."/>
            <person name="Brettin T."/>
            <person name="Bruce D."/>
            <person name="Han C."/>
            <person name="Tapia R."/>
            <person name="Gilna P."/>
            <person name="Kiss H."/>
            <person name="Schmutz J."/>
            <person name="Larimer F."/>
            <person name="Land M."/>
            <person name="Kyrpides N."/>
            <person name="Anderson I."/>
            <person name="Sanford R.A."/>
            <person name="Ritalahti K.M."/>
            <person name="Thomas H.S."/>
            <person name="Kirby J.R."/>
            <person name="Zhulin I.B."/>
            <person name="Loeffler F.E."/>
            <person name="Richardson P."/>
        </authorList>
    </citation>
    <scope>NUCLEOTIDE SEQUENCE [LARGE SCALE GENOMIC DNA]</scope>
    <source>
        <strain>2CP-C</strain>
    </source>
</reference>
<protein>
    <recommendedName>
        <fullName evidence="1">Nucleoside diphosphate kinase</fullName>
        <shortName evidence="1">NDK</shortName>
        <shortName evidence="1">NDP kinase</shortName>
        <ecNumber evidence="1">2.7.4.6</ecNumber>
    </recommendedName>
    <alternativeName>
        <fullName evidence="1">Nucleoside-2-P kinase</fullName>
    </alternativeName>
</protein>
<keyword id="KW-0067">ATP-binding</keyword>
<keyword id="KW-0963">Cytoplasm</keyword>
<keyword id="KW-0418">Kinase</keyword>
<keyword id="KW-0460">Magnesium</keyword>
<keyword id="KW-0479">Metal-binding</keyword>
<keyword id="KW-0546">Nucleotide metabolism</keyword>
<keyword id="KW-0547">Nucleotide-binding</keyword>
<keyword id="KW-0597">Phosphoprotein</keyword>
<keyword id="KW-1185">Reference proteome</keyword>
<keyword id="KW-0808">Transferase</keyword>
<organism>
    <name type="scientific">Anaeromyxobacter dehalogenans (strain 2CP-C)</name>
    <dbReference type="NCBI Taxonomy" id="290397"/>
    <lineage>
        <taxon>Bacteria</taxon>
        <taxon>Pseudomonadati</taxon>
        <taxon>Myxococcota</taxon>
        <taxon>Myxococcia</taxon>
        <taxon>Myxococcales</taxon>
        <taxon>Cystobacterineae</taxon>
        <taxon>Anaeromyxobacteraceae</taxon>
        <taxon>Anaeromyxobacter</taxon>
    </lineage>
</organism>
<name>NDK_ANADE</name>
<dbReference type="EC" id="2.7.4.6" evidence="1"/>
<dbReference type="EMBL" id="CP000251">
    <property type="protein sequence ID" value="ABC81402.1"/>
    <property type="molecule type" value="Genomic_DNA"/>
</dbReference>
<dbReference type="RefSeq" id="WP_011420685.1">
    <property type="nucleotide sequence ID" value="NC_007760.1"/>
</dbReference>
<dbReference type="SMR" id="Q2IIB9"/>
<dbReference type="STRING" id="290397.Adeh_1629"/>
<dbReference type="KEGG" id="ade:Adeh_1629"/>
<dbReference type="eggNOG" id="COG0105">
    <property type="taxonomic scope" value="Bacteria"/>
</dbReference>
<dbReference type="HOGENOM" id="CLU_060216_8_1_7"/>
<dbReference type="OrthoDB" id="9801161at2"/>
<dbReference type="Proteomes" id="UP000001935">
    <property type="component" value="Chromosome"/>
</dbReference>
<dbReference type="GO" id="GO:0005737">
    <property type="term" value="C:cytoplasm"/>
    <property type="evidence" value="ECO:0007669"/>
    <property type="project" value="UniProtKB-SubCell"/>
</dbReference>
<dbReference type="GO" id="GO:0005524">
    <property type="term" value="F:ATP binding"/>
    <property type="evidence" value="ECO:0007669"/>
    <property type="project" value="UniProtKB-UniRule"/>
</dbReference>
<dbReference type="GO" id="GO:0046872">
    <property type="term" value="F:metal ion binding"/>
    <property type="evidence" value="ECO:0007669"/>
    <property type="project" value="UniProtKB-KW"/>
</dbReference>
<dbReference type="GO" id="GO:0004550">
    <property type="term" value="F:nucleoside diphosphate kinase activity"/>
    <property type="evidence" value="ECO:0007669"/>
    <property type="project" value="UniProtKB-UniRule"/>
</dbReference>
<dbReference type="GO" id="GO:0006241">
    <property type="term" value="P:CTP biosynthetic process"/>
    <property type="evidence" value="ECO:0007669"/>
    <property type="project" value="UniProtKB-UniRule"/>
</dbReference>
<dbReference type="GO" id="GO:0006183">
    <property type="term" value="P:GTP biosynthetic process"/>
    <property type="evidence" value="ECO:0007669"/>
    <property type="project" value="UniProtKB-UniRule"/>
</dbReference>
<dbReference type="GO" id="GO:0006228">
    <property type="term" value="P:UTP biosynthetic process"/>
    <property type="evidence" value="ECO:0007669"/>
    <property type="project" value="UniProtKB-UniRule"/>
</dbReference>
<dbReference type="CDD" id="cd04413">
    <property type="entry name" value="NDPk_I"/>
    <property type="match status" value="1"/>
</dbReference>
<dbReference type="FunFam" id="3.30.70.141:FF:000001">
    <property type="entry name" value="Nucleoside diphosphate kinase"/>
    <property type="match status" value="1"/>
</dbReference>
<dbReference type="Gene3D" id="3.30.70.141">
    <property type="entry name" value="Nucleoside diphosphate kinase-like domain"/>
    <property type="match status" value="1"/>
</dbReference>
<dbReference type="HAMAP" id="MF_00451">
    <property type="entry name" value="NDP_kinase"/>
    <property type="match status" value="1"/>
</dbReference>
<dbReference type="InterPro" id="IPR034907">
    <property type="entry name" value="NDK-like_dom"/>
</dbReference>
<dbReference type="InterPro" id="IPR036850">
    <property type="entry name" value="NDK-like_dom_sf"/>
</dbReference>
<dbReference type="InterPro" id="IPR001564">
    <property type="entry name" value="Nucleoside_diP_kinase"/>
</dbReference>
<dbReference type="InterPro" id="IPR023005">
    <property type="entry name" value="Nucleoside_diP_kinase_AS"/>
</dbReference>
<dbReference type="NCBIfam" id="NF001908">
    <property type="entry name" value="PRK00668.1"/>
    <property type="match status" value="1"/>
</dbReference>
<dbReference type="PANTHER" id="PTHR11349">
    <property type="entry name" value="NUCLEOSIDE DIPHOSPHATE KINASE"/>
    <property type="match status" value="1"/>
</dbReference>
<dbReference type="Pfam" id="PF00334">
    <property type="entry name" value="NDK"/>
    <property type="match status" value="1"/>
</dbReference>
<dbReference type="PRINTS" id="PR01243">
    <property type="entry name" value="NUCDPKINASE"/>
</dbReference>
<dbReference type="SMART" id="SM00562">
    <property type="entry name" value="NDK"/>
    <property type="match status" value="1"/>
</dbReference>
<dbReference type="SUPFAM" id="SSF54919">
    <property type="entry name" value="Nucleoside diphosphate kinase, NDK"/>
    <property type="match status" value="1"/>
</dbReference>
<dbReference type="PROSITE" id="PS00469">
    <property type="entry name" value="NDPK"/>
    <property type="match status" value="1"/>
</dbReference>
<dbReference type="PROSITE" id="PS51374">
    <property type="entry name" value="NDPK_LIKE"/>
    <property type="match status" value="1"/>
</dbReference>
<comment type="function">
    <text evidence="1">Major role in the synthesis of nucleoside triphosphates other than ATP. The ATP gamma phosphate is transferred to the NDP beta phosphate via a ping-pong mechanism, using a phosphorylated active-site intermediate.</text>
</comment>
<comment type="catalytic activity">
    <reaction evidence="1">
        <text>a 2'-deoxyribonucleoside 5'-diphosphate + ATP = a 2'-deoxyribonucleoside 5'-triphosphate + ADP</text>
        <dbReference type="Rhea" id="RHEA:44640"/>
        <dbReference type="ChEBI" id="CHEBI:30616"/>
        <dbReference type="ChEBI" id="CHEBI:61560"/>
        <dbReference type="ChEBI" id="CHEBI:73316"/>
        <dbReference type="ChEBI" id="CHEBI:456216"/>
        <dbReference type="EC" id="2.7.4.6"/>
    </reaction>
</comment>
<comment type="catalytic activity">
    <reaction evidence="1">
        <text>a ribonucleoside 5'-diphosphate + ATP = a ribonucleoside 5'-triphosphate + ADP</text>
        <dbReference type="Rhea" id="RHEA:18113"/>
        <dbReference type="ChEBI" id="CHEBI:30616"/>
        <dbReference type="ChEBI" id="CHEBI:57930"/>
        <dbReference type="ChEBI" id="CHEBI:61557"/>
        <dbReference type="ChEBI" id="CHEBI:456216"/>
        <dbReference type="EC" id="2.7.4.6"/>
    </reaction>
</comment>
<comment type="cofactor">
    <cofactor evidence="1">
        <name>Mg(2+)</name>
        <dbReference type="ChEBI" id="CHEBI:18420"/>
    </cofactor>
</comment>
<comment type="subunit">
    <text evidence="1">Homotetramer.</text>
</comment>
<comment type="subcellular location">
    <subcellularLocation>
        <location evidence="1">Cytoplasm</location>
    </subcellularLocation>
</comment>
<comment type="similarity">
    <text evidence="1">Belongs to the NDK family.</text>
</comment>
<gene>
    <name evidence="1" type="primary">ndk</name>
    <name type="ordered locus">Adeh_1629</name>
</gene>
<evidence type="ECO:0000255" key="1">
    <source>
        <dbReference type="HAMAP-Rule" id="MF_00451"/>
    </source>
</evidence>
<accession>Q2IIB9</accession>
<sequence>MAIERTLSIIKPDGVEKGIIGKIIGRFEEKGLKPVAIRLTQLSKAEAEGFYAVHKARPFFADLVKFMTSGPVVLMVLEGENAVARNREIMGATDPKKADAGTIRKDFATDIEKNTVHGSDSVENAKIEVSYFFPEVQVHAYEWKKLA</sequence>
<feature type="chain" id="PRO_0000242492" description="Nucleoside diphosphate kinase">
    <location>
        <begin position="1"/>
        <end position="147"/>
    </location>
</feature>
<feature type="active site" description="Pros-phosphohistidine intermediate" evidence="1">
    <location>
        <position position="117"/>
    </location>
</feature>
<feature type="binding site" evidence="1">
    <location>
        <position position="11"/>
    </location>
    <ligand>
        <name>ATP</name>
        <dbReference type="ChEBI" id="CHEBI:30616"/>
    </ligand>
</feature>
<feature type="binding site" evidence="1">
    <location>
        <position position="59"/>
    </location>
    <ligand>
        <name>ATP</name>
        <dbReference type="ChEBI" id="CHEBI:30616"/>
    </ligand>
</feature>
<feature type="binding site" evidence="1">
    <location>
        <position position="87"/>
    </location>
    <ligand>
        <name>ATP</name>
        <dbReference type="ChEBI" id="CHEBI:30616"/>
    </ligand>
</feature>
<feature type="binding site" evidence="1">
    <location>
        <position position="93"/>
    </location>
    <ligand>
        <name>ATP</name>
        <dbReference type="ChEBI" id="CHEBI:30616"/>
    </ligand>
</feature>
<feature type="binding site" evidence="1">
    <location>
        <position position="104"/>
    </location>
    <ligand>
        <name>ATP</name>
        <dbReference type="ChEBI" id="CHEBI:30616"/>
    </ligand>
</feature>
<feature type="binding site" evidence="1">
    <location>
        <position position="114"/>
    </location>
    <ligand>
        <name>ATP</name>
        <dbReference type="ChEBI" id="CHEBI:30616"/>
    </ligand>
</feature>
<proteinExistence type="inferred from homology"/>